<comment type="function">
    <text evidence="1 2">Participates in electron transfer between P700 and the cytochrome b6-f complex in photosystem I.</text>
</comment>
<comment type="cofactor">
    <cofactor evidence="1 2">
        <name>Cu(2+)</name>
        <dbReference type="ChEBI" id="CHEBI:29036"/>
    </cofactor>
</comment>
<comment type="subcellular location">
    <subcellularLocation>
        <location evidence="2">Cellular thylakoid membrane</location>
        <topology evidence="2">Peripheral membrane protein</topology>
        <orientation evidence="2">Lumenal side</orientation>
    </subcellularLocation>
    <text>Loosely bound to the thylakoid inner membrane surface (PubMed:10089349).</text>
</comment>
<comment type="similarity">
    <text evidence="1">Belongs to the plastocyanin family.</text>
</comment>
<accession>Q51883</accession>
<organism>
    <name type="scientific">Leptolyngbya laminosa</name>
    <name type="common">Phormidium laminosum</name>
    <dbReference type="NCBI Taxonomy" id="477181"/>
    <lineage>
        <taxon>Bacteria</taxon>
        <taxon>Bacillati</taxon>
        <taxon>Cyanobacteriota</taxon>
        <taxon>Cyanophyceae</taxon>
        <taxon>Leptolyngbyales</taxon>
        <taxon>Leptolyngbyaceae</taxon>
        <taxon>Leptolyngbya group</taxon>
        <taxon>Leptolyngbya</taxon>
    </lineage>
</organism>
<keyword id="KW-0002">3D-structure</keyword>
<keyword id="KW-0186">Copper</keyword>
<keyword id="KW-0903">Direct protein sequencing</keyword>
<keyword id="KW-0249">Electron transport</keyword>
<keyword id="KW-0472">Membrane</keyword>
<keyword id="KW-0479">Metal-binding</keyword>
<keyword id="KW-0732">Signal</keyword>
<keyword id="KW-0793">Thylakoid</keyword>
<keyword id="KW-0813">Transport</keyword>
<dbReference type="EMBL" id="X83207">
    <property type="protein sequence ID" value="CAA58210.1"/>
    <property type="molecule type" value="Genomic_DNA"/>
</dbReference>
<dbReference type="PIR" id="S51922">
    <property type="entry name" value="S51922"/>
</dbReference>
<dbReference type="PDB" id="1BAW">
    <property type="method" value="X-ray"/>
    <property type="resolution" value="2.80 A"/>
    <property type="chains" value="A/B/C=35-139"/>
</dbReference>
<dbReference type="PDB" id="2Q5B">
    <property type="method" value="X-ray"/>
    <property type="resolution" value="1.45 A"/>
    <property type="chains" value="A/B/C=35-139"/>
</dbReference>
<dbReference type="PDB" id="2W88">
    <property type="method" value="X-ray"/>
    <property type="resolution" value="2.89 A"/>
    <property type="chains" value="A/B/C=35-139"/>
</dbReference>
<dbReference type="PDB" id="2W8C">
    <property type="method" value="X-ray"/>
    <property type="resolution" value="1.80 A"/>
    <property type="chains" value="A/B=35-139"/>
</dbReference>
<dbReference type="PDB" id="3BQV">
    <property type="method" value="X-ray"/>
    <property type="resolution" value="1.50 A"/>
    <property type="chains" value="A=35-139"/>
</dbReference>
<dbReference type="PDB" id="3CVB">
    <property type="method" value="X-ray"/>
    <property type="resolution" value="1.40 A"/>
    <property type="chains" value="A/B=35-139"/>
</dbReference>
<dbReference type="PDB" id="3CVC">
    <property type="method" value="X-ray"/>
    <property type="resolution" value="1.72 A"/>
    <property type="chains" value="A=35-139"/>
</dbReference>
<dbReference type="PDB" id="3CVD">
    <property type="method" value="X-ray"/>
    <property type="resolution" value="1.50 A"/>
    <property type="chains" value="A/B/C=35-139"/>
</dbReference>
<dbReference type="PDB" id="4R0O">
    <property type="method" value="X-ray"/>
    <property type="resolution" value="4.20 A"/>
    <property type="chains" value="A/B/C/D=35-139"/>
</dbReference>
<dbReference type="PDBsum" id="1BAW"/>
<dbReference type="PDBsum" id="2Q5B"/>
<dbReference type="PDBsum" id="2W88"/>
<dbReference type="PDBsum" id="2W8C"/>
<dbReference type="PDBsum" id="3BQV"/>
<dbReference type="PDBsum" id="3CVB"/>
<dbReference type="PDBsum" id="3CVC"/>
<dbReference type="PDBsum" id="3CVD"/>
<dbReference type="PDBsum" id="4R0O"/>
<dbReference type="SASBDB" id="Q51883"/>
<dbReference type="SMR" id="Q51883"/>
<dbReference type="EvolutionaryTrace" id="Q51883"/>
<dbReference type="GO" id="GO:0031676">
    <property type="term" value="C:plasma membrane-derived thylakoid membrane"/>
    <property type="evidence" value="ECO:0007669"/>
    <property type="project" value="UniProtKB-SubCell"/>
</dbReference>
<dbReference type="GO" id="GO:0005507">
    <property type="term" value="F:copper ion binding"/>
    <property type="evidence" value="ECO:0007669"/>
    <property type="project" value="UniProtKB-UniRule"/>
</dbReference>
<dbReference type="GO" id="GO:0009055">
    <property type="term" value="F:electron transfer activity"/>
    <property type="evidence" value="ECO:0007669"/>
    <property type="project" value="UniProtKB-UniRule"/>
</dbReference>
<dbReference type="CDD" id="cd04219">
    <property type="entry name" value="Plastocyanin"/>
    <property type="match status" value="1"/>
</dbReference>
<dbReference type="Gene3D" id="2.60.40.420">
    <property type="entry name" value="Cupredoxins - blue copper proteins"/>
    <property type="match status" value="1"/>
</dbReference>
<dbReference type="HAMAP" id="MF_00566">
    <property type="entry name" value="Cytb6_f_plastocyanin"/>
    <property type="match status" value="1"/>
</dbReference>
<dbReference type="InterPro" id="IPR000923">
    <property type="entry name" value="BlueCu_1"/>
</dbReference>
<dbReference type="InterPro" id="IPR028871">
    <property type="entry name" value="BlueCu_1_BS"/>
</dbReference>
<dbReference type="InterPro" id="IPR001235">
    <property type="entry name" value="Copper_blue_Plastocyanin"/>
</dbReference>
<dbReference type="InterPro" id="IPR008972">
    <property type="entry name" value="Cupredoxin"/>
</dbReference>
<dbReference type="InterPro" id="IPR002387">
    <property type="entry name" value="Plastocyanin"/>
</dbReference>
<dbReference type="InterPro" id="IPR023511">
    <property type="entry name" value="Plastocyanin_cyanobac"/>
</dbReference>
<dbReference type="NCBIfam" id="TIGR02656">
    <property type="entry name" value="cyanin_plasto"/>
    <property type="match status" value="1"/>
</dbReference>
<dbReference type="PANTHER" id="PTHR34192">
    <property type="entry name" value="PLASTOCYANIN MAJOR ISOFORM, CHLOROPLASTIC-RELATED"/>
    <property type="match status" value="1"/>
</dbReference>
<dbReference type="PANTHER" id="PTHR34192:SF10">
    <property type="entry name" value="PLASTOCYANIN MAJOR ISOFORM, CHLOROPLASTIC-RELATED"/>
    <property type="match status" value="1"/>
</dbReference>
<dbReference type="Pfam" id="PF00127">
    <property type="entry name" value="Copper-bind"/>
    <property type="match status" value="1"/>
</dbReference>
<dbReference type="PRINTS" id="PR00156">
    <property type="entry name" value="COPPERBLUE"/>
</dbReference>
<dbReference type="PRINTS" id="PR00157">
    <property type="entry name" value="PLASTOCYANIN"/>
</dbReference>
<dbReference type="SUPFAM" id="SSF49503">
    <property type="entry name" value="Cupredoxins"/>
    <property type="match status" value="1"/>
</dbReference>
<dbReference type="PROSITE" id="PS00196">
    <property type="entry name" value="COPPER_BLUE"/>
    <property type="match status" value="1"/>
</dbReference>
<sequence>MKLIAQISRSLSLALFALVLMVGSFVAVMSPAAAETFTVKMGADSGLLQFEPANVTVHPGDTVKWVNNKLPPHNILFDDKQVPGASKELADKLSHSQLMFSPGESYEITFSSDFPAGTYTYYCAPHRGAGMVGKITVEG</sequence>
<protein>
    <recommendedName>
        <fullName>Plastocyanin</fullName>
    </recommendedName>
</protein>
<proteinExistence type="evidence at protein level"/>
<evidence type="ECO:0000255" key="1">
    <source>
        <dbReference type="HAMAP-Rule" id="MF_00566"/>
    </source>
</evidence>
<evidence type="ECO:0000269" key="2">
    <source>
    </source>
</evidence>
<evidence type="ECO:0007829" key="3">
    <source>
        <dbReference type="PDB" id="1BAW"/>
    </source>
</evidence>
<evidence type="ECO:0007829" key="4">
    <source>
        <dbReference type="PDB" id="2Q5B"/>
    </source>
</evidence>
<evidence type="ECO:0007829" key="5">
    <source>
        <dbReference type="PDB" id="3CVB"/>
    </source>
</evidence>
<evidence type="ECO:0007829" key="6">
    <source>
        <dbReference type="PDB" id="3CVC"/>
    </source>
</evidence>
<gene>
    <name type="primary">petE</name>
</gene>
<reference key="1">
    <citation type="journal article" date="1995" name="Plant Mol. Biol.">
        <title>Characterization of plastocyanin from the cyanobacterium Phormidium laminosum: copper-inducible expression and SecA-dependent targeting in Escherichia coli.</title>
        <authorList>
            <person name="Varley J.P.A."/>
            <person name="Moehrle J.J."/>
            <person name="Manasse R.S."/>
            <person name="Bendall D.S."/>
            <person name="Howe C.J."/>
        </authorList>
    </citation>
    <scope>NUCLEOTIDE SEQUENCE [GENOMIC DNA]</scope>
    <scope>PARTIAL PROTEIN SEQUENCE</scope>
</reference>
<reference key="2">
    <citation type="journal article" date="1999" name="Acta Crystallogr. D">
        <title>The structure of plastocyanin from the cyanobacterium Phormidium laminosum.</title>
        <authorList>
            <person name="Bond C.S."/>
            <person name="Bendall D.S."/>
            <person name="Freeman H.C."/>
            <person name="Guss J.M."/>
            <person name="Howe C.J."/>
            <person name="Wagner M.J."/>
            <person name="Wilce M.C."/>
        </authorList>
    </citation>
    <scope>X-RAY CRYSTALLOGRAPHY (2.8 ANGSTROMS) OF 35-139 IN COMPLEX WITH COPPER</scope>
    <scope>FUNCTION</scope>
    <scope>COFACTOR</scope>
    <scope>SUBCELLULAR LOCATION</scope>
</reference>
<name>PLAS_LEPLM</name>
<feature type="signal peptide">
    <location>
        <begin position="1"/>
        <end position="34"/>
    </location>
</feature>
<feature type="chain" id="PRO_0000002901" description="Plastocyanin">
    <location>
        <begin position="35"/>
        <end position="139"/>
    </location>
</feature>
<feature type="domain" description="Plastocyanin-like">
    <location>
        <begin position="35"/>
        <end position="139"/>
    </location>
</feature>
<feature type="binding site" evidence="2">
    <location>
        <position position="73"/>
    </location>
    <ligand>
        <name>Cu cation</name>
        <dbReference type="ChEBI" id="CHEBI:23378"/>
    </ligand>
</feature>
<feature type="binding site" evidence="2">
    <location>
        <position position="123"/>
    </location>
    <ligand>
        <name>Cu cation</name>
        <dbReference type="ChEBI" id="CHEBI:23378"/>
    </ligand>
</feature>
<feature type="binding site" evidence="2">
    <location>
        <position position="126"/>
    </location>
    <ligand>
        <name>Cu cation</name>
        <dbReference type="ChEBI" id="CHEBI:23378"/>
    </ligand>
</feature>
<feature type="binding site" evidence="2">
    <location>
        <position position="131"/>
    </location>
    <ligand>
        <name>Cu cation</name>
        <dbReference type="ChEBI" id="CHEBI:23378"/>
    </ligand>
</feature>
<feature type="strand" evidence="5">
    <location>
        <begin position="36"/>
        <end position="42"/>
    </location>
</feature>
<feature type="turn" evidence="6">
    <location>
        <begin position="44"/>
        <end position="46"/>
    </location>
</feature>
<feature type="strand" evidence="5">
    <location>
        <begin position="50"/>
        <end position="57"/>
    </location>
</feature>
<feature type="strand" evidence="5">
    <location>
        <begin position="61"/>
        <end position="67"/>
    </location>
</feature>
<feature type="strand" evidence="3">
    <location>
        <begin position="69"/>
        <end position="71"/>
    </location>
</feature>
<feature type="strand" evidence="5">
    <location>
        <begin position="73"/>
        <end position="77"/>
    </location>
</feature>
<feature type="helix" evidence="4">
    <location>
        <begin position="79"/>
        <end position="81"/>
    </location>
</feature>
<feature type="helix" evidence="5">
    <location>
        <begin position="83"/>
        <end position="85"/>
    </location>
</feature>
<feature type="helix" evidence="5">
    <location>
        <begin position="87"/>
        <end position="93"/>
    </location>
</feature>
<feature type="strand" evidence="5">
    <location>
        <begin position="95"/>
        <end position="99"/>
    </location>
</feature>
<feature type="strand" evidence="5">
    <location>
        <begin position="105"/>
        <end position="110"/>
    </location>
</feature>
<feature type="strand" evidence="5">
    <location>
        <begin position="116"/>
        <end position="122"/>
    </location>
</feature>
<feature type="turn" evidence="5">
    <location>
        <begin position="124"/>
        <end position="126"/>
    </location>
</feature>
<feature type="helix" evidence="5">
    <location>
        <begin position="127"/>
        <end position="129"/>
    </location>
</feature>
<feature type="strand" evidence="5">
    <location>
        <begin position="132"/>
        <end position="137"/>
    </location>
</feature>